<accession>A7HNX2</accession>
<comment type="function">
    <text evidence="1">Catalyzes the 2-thiolation of uridine at the wobble position (U34) of tRNA, leading to the formation of s(2)U34.</text>
</comment>
<comment type="catalytic activity">
    <reaction evidence="1">
        <text>S-sulfanyl-L-cysteinyl-[protein] + uridine(34) in tRNA + AH2 + ATP = 2-thiouridine(34) in tRNA + L-cysteinyl-[protein] + A + AMP + diphosphate + H(+)</text>
        <dbReference type="Rhea" id="RHEA:47032"/>
        <dbReference type="Rhea" id="RHEA-COMP:10131"/>
        <dbReference type="Rhea" id="RHEA-COMP:11726"/>
        <dbReference type="Rhea" id="RHEA-COMP:11727"/>
        <dbReference type="Rhea" id="RHEA-COMP:11728"/>
        <dbReference type="ChEBI" id="CHEBI:13193"/>
        <dbReference type="ChEBI" id="CHEBI:15378"/>
        <dbReference type="ChEBI" id="CHEBI:17499"/>
        <dbReference type="ChEBI" id="CHEBI:29950"/>
        <dbReference type="ChEBI" id="CHEBI:30616"/>
        <dbReference type="ChEBI" id="CHEBI:33019"/>
        <dbReference type="ChEBI" id="CHEBI:61963"/>
        <dbReference type="ChEBI" id="CHEBI:65315"/>
        <dbReference type="ChEBI" id="CHEBI:87170"/>
        <dbReference type="ChEBI" id="CHEBI:456215"/>
        <dbReference type="EC" id="2.8.1.13"/>
    </reaction>
</comment>
<comment type="subcellular location">
    <subcellularLocation>
        <location evidence="1">Cytoplasm</location>
    </subcellularLocation>
</comment>
<comment type="similarity">
    <text evidence="1">Belongs to the MnmA/TRMU family.</text>
</comment>
<proteinExistence type="inferred from homology"/>
<keyword id="KW-0067">ATP-binding</keyword>
<keyword id="KW-0963">Cytoplasm</keyword>
<keyword id="KW-1015">Disulfide bond</keyword>
<keyword id="KW-0547">Nucleotide-binding</keyword>
<keyword id="KW-1185">Reference proteome</keyword>
<keyword id="KW-0694">RNA-binding</keyword>
<keyword id="KW-0808">Transferase</keyword>
<keyword id="KW-0819">tRNA processing</keyword>
<keyword id="KW-0820">tRNA-binding</keyword>
<name>MNMA_FERNB</name>
<sequence>MSAKVGVLLSGGVDSAVALYLLIEKGYEVTAYHMKTVRDELYITKQIKHKVCCSPSDTHDAQLIAKKFGVPFKIIHVEDVFKEKIIDYFISENLAGKTPNPCFFCNDYIKFGFVMDVALSDGMDFVASGHYARILNGKLYRALDKEKDQSYFLASIKKEKLSKILLPNGEYSKETIRDIAERAGIHVAKKIDSQDLCFLPDNDFKSFFEERGVKIEPGNIITSEGKIIGKHEGLPFYTIGQRKLGVAAGQKLYVKAKNVEGNFIVVSPLDEVYQNEMRVKNLNIYVDLPDEFLATVKIRKKFKEVPCRVEYLKDELKVQFLEPVFAVTPGQIAVFYNEDEVLCSGVIE</sequence>
<protein>
    <recommendedName>
        <fullName evidence="1">tRNA-specific 2-thiouridylase MnmA</fullName>
        <ecNumber evidence="1">2.8.1.13</ecNumber>
    </recommendedName>
</protein>
<reference key="1">
    <citation type="submission" date="2007-07" db="EMBL/GenBank/DDBJ databases">
        <title>Complete sequence of Fervidobacterium nodosum Rt17-B1.</title>
        <authorList>
            <consortium name="US DOE Joint Genome Institute"/>
            <person name="Copeland A."/>
            <person name="Lucas S."/>
            <person name="Lapidus A."/>
            <person name="Barry K."/>
            <person name="Glavina del Rio T."/>
            <person name="Dalin E."/>
            <person name="Tice H."/>
            <person name="Pitluck S."/>
            <person name="Saunders E."/>
            <person name="Brettin T."/>
            <person name="Bruce D."/>
            <person name="Detter J.C."/>
            <person name="Han C."/>
            <person name="Schmutz J."/>
            <person name="Larimer F."/>
            <person name="Land M."/>
            <person name="Hauser L."/>
            <person name="Kyrpides N."/>
            <person name="Mikhailova N."/>
            <person name="Nelson K."/>
            <person name="Gogarten J.P."/>
            <person name="Noll K."/>
            <person name="Richardson P."/>
        </authorList>
    </citation>
    <scope>NUCLEOTIDE SEQUENCE [LARGE SCALE GENOMIC DNA]</scope>
    <source>
        <strain>ATCC 35602 / DSM 5306 / Rt17-B1</strain>
    </source>
</reference>
<organism>
    <name type="scientific">Fervidobacterium nodosum (strain ATCC 35602 / DSM 5306 / Rt17-B1)</name>
    <dbReference type="NCBI Taxonomy" id="381764"/>
    <lineage>
        <taxon>Bacteria</taxon>
        <taxon>Thermotogati</taxon>
        <taxon>Thermotogota</taxon>
        <taxon>Thermotogae</taxon>
        <taxon>Thermotogales</taxon>
        <taxon>Fervidobacteriaceae</taxon>
        <taxon>Fervidobacterium</taxon>
    </lineage>
</organism>
<gene>
    <name evidence="1" type="primary">mnmA</name>
    <name type="ordered locus">Fnod_1772</name>
</gene>
<evidence type="ECO:0000255" key="1">
    <source>
        <dbReference type="HAMAP-Rule" id="MF_00144"/>
    </source>
</evidence>
<dbReference type="EC" id="2.8.1.13" evidence="1"/>
<dbReference type="EMBL" id="CP000771">
    <property type="protein sequence ID" value="ABS61605.1"/>
    <property type="molecule type" value="Genomic_DNA"/>
</dbReference>
<dbReference type="RefSeq" id="WP_011994896.1">
    <property type="nucleotide sequence ID" value="NC_009718.1"/>
</dbReference>
<dbReference type="SMR" id="A7HNX2"/>
<dbReference type="STRING" id="381764.Fnod_1772"/>
<dbReference type="KEGG" id="fno:Fnod_1772"/>
<dbReference type="eggNOG" id="COG0482">
    <property type="taxonomic scope" value="Bacteria"/>
</dbReference>
<dbReference type="HOGENOM" id="CLU_035188_0_0_0"/>
<dbReference type="OrthoDB" id="9800696at2"/>
<dbReference type="Proteomes" id="UP000002415">
    <property type="component" value="Chromosome"/>
</dbReference>
<dbReference type="GO" id="GO:0005737">
    <property type="term" value="C:cytoplasm"/>
    <property type="evidence" value="ECO:0007669"/>
    <property type="project" value="UniProtKB-SubCell"/>
</dbReference>
<dbReference type="GO" id="GO:0005524">
    <property type="term" value="F:ATP binding"/>
    <property type="evidence" value="ECO:0007669"/>
    <property type="project" value="UniProtKB-KW"/>
</dbReference>
<dbReference type="GO" id="GO:0000049">
    <property type="term" value="F:tRNA binding"/>
    <property type="evidence" value="ECO:0007669"/>
    <property type="project" value="UniProtKB-KW"/>
</dbReference>
<dbReference type="GO" id="GO:0103016">
    <property type="term" value="F:tRNA-uridine 2-sulfurtransferase activity"/>
    <property type="evidence" value="ECO:0007669"/>
    <property type="project" value="UniProtKB-EC"/>
</dbReference>
<dbReference type="GO" id="GO:0002143">
    <property type="term" value="P:tRNA wobble position uridine thiolation"/>
    <property type="evidence" value="ECO:0007669"/>
    <property type="project" value="TreeGrafter"/>
</dbReference>
<dbReference type="CDD" id="cd01998">
    <property type="entry name" value="MnmA_TRMU-like"/>
    <property type="match status" value="1"/>
</dbReference>
<dbReference type="Gene3D" id="2.30.30.280">
    <property type="entry name" value="Adenine nucleotide alpha hydrolases-like domains"/>
    <property type="match status" value="1"/>
</dbReference>
<dbReference type="Gene3D" id="3.40.50.620">
    <property type="entry name" value="HUPs"/>
    <property type="match status" value="1"/>
</dbReference>
<dbReference type="Gene3D" id="2.40.30.10">
    <property type="entry name" value="Translation factors"/>
    <property type="match status" value="1"/>
</dbReference>
<dbReference type="HAMAP" id="MF_00144">
    <property type="entry name" value="tRNA_thiouridyl_MnmA"/>
    <property type="match status" value="1"/>
</dbReference>
<dbReference type="InterPro" id="IPR004506">
    <property type="entry name" value="MnmA-like"/>
</dbReference>
<dbReference type="InterPro" id="IPR046885">
    <property type="entry name" value="MnmA-like_C"/>
</dbReference>
<dbReference type="InterPro" id="IPR046884">
    <property type="entry name" value="MnmA-like_central"/>
</dbReference>
<dbReference type="InterPro" id="IPR023382">
    <property type="entry name" value="MnmA-like_central_sf"/>
</dbReference>
<dbReference type="InterPro" id="IPR014729">
    <property type="entry name" value="Rossmann-like_a/b/a_fold"/>
</dbReference>
<dbReference type="NCBIfam" id="NF001138">
    <property type="entry name" value="PRK00143.1"/>
    <property type="match status" value="1"/>
</dbReference>
<dbReference type="NCBIfam" id="TIGR00420">
    <property type="entry name" value="trmU"/>
    <property type="match status" value="1"/>
</dbReference>
<dbReference type="PANTHER" id="PTHR11933:SF5">
    <property type="entry name" value="MITOCHONDRIAL TRNA-SPECIFIC 2-THIOURIDYLASE 1"/>
    <property type="match status" value="1"/>
</dbReference>
<dbReference type="PANTHER" id="PTHR11933">
    <property type="entry name" value="TRNA 5-METHYLAMINOMETHYL-2-THIOURIDYLATE -METHYLTRANSFERASE"/>
    <property type="match status" value="1"/>
</dbReference>
<dbReference type="Pfam" id="PF03054">
    <property type="entry name" value="tRNA_Me_trans"/>
    <property type="match status" value="1"/>
</dbReference>
<dbReference type="Pfam" id="PF20258">
    <property type="entry name" value="tRNA_Me_trans_C"/>
    <property type="match status" value="1"/>
</dbReference>
<dbReference type="Pfam" id="PF20259">
    <property type="entry name" value="tRNA_Me_trans_M"/>
    <property type="match status" value="1"/>
</dbReference>
<dbReference type="SUPFAM" id="SSF52402">
    <property type="entry name" value="Adenine nucleotide alpha hydrolases-like"/>
    <property type="match status" value="1"/>
</dbReference>
<feature type="chain" id="PRO_0000349635" description="tRNA-specific 2-thiouridylase MnmA">
    <location>
        <begin position="1"/>
        <end position="348"/>
    </location>
</feature>
<feature type="region of interest" description="Interaction with tRNA" evidence="1">
    <location>
        <begin position="147"/>
        <end position="149"/>
    </location>
</feature>
<feature type="active site" description="Nucleophile" evidence="1">
    <location>
        <position position="105"/>
    </location>
</feature>
<feature type="active site" description="Cysteine persulfide intermediate" evidence="1">
    <location>
        <position position="197"/>
    </location>
</feature>
<feature type="binding site" evidence="1">
    <location>
        <begin position="8"/>
        <end position="15"/>
    </location>
    <ligand>
        <name>ATP</name>
        <dbReference type="ChEBI" id="CHEBI:30616"/>
    </ligand>
</feature>
<feature type="binding site" evidence="1">
    <location>
        <position position="34"/>
    </location>
    <ligand>
        <name>ATP</name>
        <dbReference type="ChEBI" id="CHEBI:30616"/>
    </ligand>
</feature>
<feature type="binding site" evidence="1">
    <location>
        <position position="129"/>
    </location>
    <ligand>
        <name>ATP</name>
        <dbReference type="ChEBI" id="CHEBI:30616"/>
    </ligand>
</feature>
<feature type="site" description="Interaction with tRNA" evidence="1">
    <location>
        <position position="130"/>
    </location>
</feature>
<feature type="site" description="Interaction with tRNA" evidence="1">
    <location>
        <position position="331"/>
    </location>
</feature>
<feature type="disulfide bond" description="Alternate" evidence="1">
    <location>
        <begin position="105"/>
        <end position="197"/>
    </location>
</feature>